<comment type="function">
    <text evidence="1">Dual-specificity methyltransferase that catalyzes the formation of 5-methyluridine at position 54 (m5U54) in all tRNAs, and that of position 341 (m5U341) in tmRNA (transfer-mRNA).</text>
</comment>
<comment type="catalytic activity">
    <reaction evidence="1">
        <text>uridine(54) in tRNA + S-adenosyl-L-methionine = 5-methyluridine(54) in tRNA + S-adenosyl-L-homocysteine + H(+)</text>
        <dbReference type="Rhea" id="RHEA:42712"/>
        <dbReference type="Rhea" id="RHEA-COMP:10167"/>
        <dbReference type="Rhea" id="RHEA-COMP:10193"/>
        <dbReference type="ChEBI" id="CHEBI:15378"/>
        <dbReference type="ChEBI" id="CHEBI:57856"/>
        <dbReference type="ChEBI" id="CHEBI:59789"/>
        <dbReference type="ChEBI" id="CHEBI:65315"/>
        <dbReference type="ChEBI" id="CHEBI:74447"/>
        <dbReference type="EC" id="2.1.1.35"/>
    </reaction>
</comment>
<comment type="catalytic activity">
    <reaction evidence="1">
        <text>uridine(341) in tmRNA + S-adenosyl-L-methionine = 5-methyluridine(341) in tmRNA + S-adenosyl-L-homocysteine + H(+)</text>
        <dbReference type="Rhea" id="RHEA:43612"/>
        <dbReference type="Rhea" id="RHEA-COMP:10630"/>
        <dbReference type="Rhea" id="RHEA-COMP:10631"/>
        <dbReference type="ChEBI" id="CHEBI:15378"/>
        <dbReference type="ChEBI" id="CHEBI:57856"/>
        <dbReference type="ChEBI" id="CHEBI:59789"/>
        <dbReference type="ChEBI" id="CHEBI:65315"/>
        <dbReference type="ChEBI" id="CHEBI:74447"/>
    </reaction>
</comment>
<comment type="similarity">
    <text evidence="1">Belongs to the class I-like SAM-binding methyltransferase superfamily. RNA M5U methyltransferase family. TrmA subfamily.</text>
</comment>
<name>TRMA_ACTSZ</name>
<evidence type="ECO:0000255" key="1">
    <source>
        <dbReference type="HAMAP-Rule" id="MF_01011"/>
    </source>
</evidence>
<proteinExistence type="inferred from homology"/>
<gene>
    <name evidence="1" type="primary">trmA</name>
    <name type="ordered locus">Asuc_0429</name>
</gene>
<reference key="1">
    <citation type="journal article" date="2010" name="BMC Genomics">
        <title>A genomic perspective on the potential of Actinobacillus succinogenes for industrial succinate production.</title>
        <authorList>
            <person name="McKinlay J.B."/>
            <person name="Laivenieks M."/>
            <person name="Schindler B.D."/>
            <person name="McKinlay A.A."/>
            <person name="Siddaramappa S."/>
            <person name="Challacombe J.F."/>
            <person name="Lowry S.R."/>
            <person name="Clum A."/>
            <person name="Lapidus A.L."/>
            <person name="Burkhart K.B."/>
            <person name="Harkins V."/>
            <person name="Vieille C."/>
        </authorList>
    </citation>
    <scope>NUCLEOTIDE SEQUENCE [LARGE SCALE GENOMIC DNA]</scope>
    <source>
        <strain>ATCC 55618 / DSM 22257 / CCUG 43843 / 130Z</strain>
    </source>
</reference>
<sequence>MQQLPIEKYDELLAEKCRKLTALLAPFDAPALTVFPSPTQHFRMRAEFRLWHDYSENRGGNLYHIMFDKTTKQRYRVDQFPVASQLINRMMATILPLLKEQDVLSRKLFQIDYLSTLSEQIIVSLLYHKTLTDEWQEAAQALKVRLRNLGFSVQIIGRATKQKICLDQDFVDEELSVGDKKYVYRQVENSFTQPNAALNCKMLEWAIDCTRDSQGDLLELYCGNGNFSIALAQNFRKVLATEIAKPSVAAAQFNIAANQVDNLQIIRMSAEEFTQAVNGVRAFNRLKGIDLQAYECHTIFVDPPRAGLDSDTVKLVQKYDRILYISCNPQTLCENLQILSQTHRIERAALFDQFPYTEHMEAGVWLMRK</sequence>
<keyword id="KW-0489">Methyltransferase</keyword>
<keyword id="KW-1185">Reference proteome</keyword>
<keyword id="KW-0949">S-adenosyl-L-methionine</keyword>
<keyword id="KW-0808">Transferase</keyword>
<keyword id="KW-0819">tRNA processing</keyword>
<organism>
    <name type="scientific">Actinobacillus succinogenes (strain ATCC 55618 / DSM 22257 / CCUG 43843 / 130Z)</name>
    <dbReference type="NCBI Taxonomy" id="339671"/>
    <lineage>
        <taxon>Bacteria</taxon>
        <taxon>Pseudomonadati</taxon>
        <taxon>Pseudomonadota</taxon>
        <taxon>Gammaproteobacteria</taxon>
        <taxon>Pasteurellales</taxon>
        <taxon>Pasteurellaceae</taxon>
        <taxon>Actinobacillus</taxon>
    </lineage>
</organism>
<dbReference type="EC" id="2.1.1.-" evidence="1"/>
<dbReference type="EC" id="2.1.1.35" evidence="1"/>
<dbReference type="EMBL" id="CP000746">
    <property type="protein sequence ID" value="ABR73806.1"/>
    <property type="molecule type" value="Genomic_DNA"/>
</dbReference>
<dbReference type="RefSeq" id="WP_012072191.1">
    <property type="nucleotide sequence ID" value="NC_009655.1"/>
</dbReference>
<dbReference type="SMR" id="A6VLF9"/>
<dbReference type="STRING" id="339671.Asuc_0429"/>
<dbReference type="KEGG" id="asu:Asuc_0429"/>
<dbReference type="eggNOG" id="COG2265">
    <property type="taxonomic scope" value="Bacteria"/>
</dbReference>
<dbReference type="HOGENOM" id="CLU_043022_0_0_6"/>
<dbReference type="OrthoDB" id="9804590at2"/>
<dbReference type="Proteomes" id="UP000001114">
    <property type="component" value="Chromosome"/>
</dbReference>
<dbReference type="GO" id="GO:0005829">
    <property type="term" value="C:cytosol"/>
    <property type="evidence" value="ECO:0007669"/>
    <property type="project" value="TreeGrafter"/>
</dbReference>
<dbReference type="GO" id="GO:0019843">
    <property type="term" value="F:rRNA binding"/>
    <property type="evidence" value="ECO:0007669"/>
    <property type="project" value="TreeGrafter"/>
</dbReference>
<dbReference type="GO" id="GO:0030697">
    <property type="term" value="F:tRNA (uracil(54)-C5)-methyltransferase activity, S-adenosyl methionine-dependent"/>
    <property type="evidence" value="ECO:0007669"/>
    <property type="project" value="UniProtKB-UniRule"/>
</dbReference>
<dbReference type="GO" id="GO:0000049">
    <property type="term" value="F:tRNA binding"/>
    <property type="evidence" value="ECO:0007669"/>
    <property type="project" value="TreeGrafter"/>
</dbReference>
<dbReference type="GO" id="GO:0030488">
    <property type="term" value="P:tRNA methylation"/>
    <property type="evidence" value="ECO:0007669"/>
    <property type="project" value="UniProtKB-UniRule"/>
</dbReference>
<dbReference type="CDD" id="cd02440">
    <property type="entry name" value="AdoMet_MTases"/>
    <property type="match status" value="1"/>
</dbReference>
<dbReference type="FunFam" id="2.40.50.1070:FF:000001">
    <property type="entry name" value="tRNA/tmRNA (uracil-C(5))-methyltransferase"/>
    <property type="match status" value="1"/>
</dbReference>
<dbReference type="FunFam" id="3.40.50.150:FF:000012">
    <property type="entry name" value="tRNA/tmRNA (uracil-C(5))-methyltransferase"/>
    <property type="match status" value="1"/>
</dbReference>
<dbReference type="Gene3D" id="2.40.50.1070">
    <property type="match status" value="1"/>
</dbReference>
<dbReference type="Gene3D" id="3.40.50.150">
    <property type="entry name" value="Vaccinia Virus protein VP39"/>
    <property type="match status" value="1"/>
</dbReference>
<dbReference type="HAMAP" id="MF_01011">
    <property type="entry name" value="RNA_methyltr_TrmA"/>
    <property type="match status" value="1"/>
</dbReference>
<dbReference type="InterPro" id="IPR030390">
    <property type="entry name" value="MeTrfase_TrmA_AS"/>
</dbReference>
<dbReference type="InterPro" id="IPR030391">
    <property type="entry name" value="MeTrfase_TrmA_CS"/>
</dbReference>
<dbReference type="InterPro" id="IPR029063">
    <property type="entry name" value="SAM-dependent_MTases_sf"/>
</dbReference>
<dbReference type="InterPro" id="IPR011869">
    <property type="entry name" value="TrmA_MeTrfase"/>
</dbReference>
<dbReference type="InterPro" id="IPR010280">
    <property type="entry name" value="U5_MeTrfase_fam"/>
</dbReference>
<dbReference type="NCBIfam" id="TIGR02143">
    <property type="entry name" value="trmA_only"/>
    <property type="match status" value="1"/>
</dbReference>
<dbReference type="PANTHER" id="PTHR47790">
    <property type="entry name" value="TRNA/TMRNA (URACIL-C(5))-METHYLTRANSFERASE"/>
    <property type="match status" value="1"/>
</dbReference>
<dbReference type="PANTHER" id="PTHR47790:SF2">
    <property type="entry name" value="TRNA_TMRNA (URACIL-C(5))-METHYLTRANSFERASE"/>
    <property type="match status" value="1"/>
</dbReference>
<dbReference type="Pfam" id="PF05958">
    <property type="entry name" value="tRNA_U5-meth_tr"/>
    <property type="match status" value="1"/>
</dbReference>
<dbReference type="SUPFAM" id="SSF53335">
    <property type="entry name" value="S-adenosyl-L-methionine-dependent methyltransferases"/>
    <property type="match status" value="1"/>
</dbReference>
<dbReference type="PROSITE" id="PS51687">
    <property type="entry name" value="SAM_MT_RNA_M5U"/>
    <property type="match status" value="1"/>
</dbReference>
<dbReference type="PROSITE" id="PS01230">
    <property type="entry name" value="TRMA_1"/>
    <property type="match status" value="1"/>
</dbReference>
<dbReference type="PROSITE" id="PS01231">
    <property type="entry name" value="TRMA_2"/>
    <property type="match status" value="1"/>
</dbReference>
<feature type="chain" id="PRO_0000319444" description="tRNA/tmRNA (uracil-C(5))-methyltransferase">
    <location>
        <begin position="1"/>
        <end position="369"/>
    </location>
</feature>
<feature type="active site" description="Nucleophile" evidence="1">
    <location>
        <position position="327"/>
    </location>
</feature>
<feature type="active site" description="Proton acceptor" evidence="1">
    <location>
        <position position="361"/>
    </location>
</feature>
<feature type="binding site" evidence="1">
    <location>
        <position position="193"/>
    </location>
    <ligand>
        <name>S-adenosyl-L-methionine</name>
        <dbReference type="ChEBI" id="CHEBI:59789"/>
    </ligand>
</feature>
<feature type="binding site" evidence="1">
    <location>
        <position position="221"/>
    </location>
    <ligand>
        <name>S-adenosyl-L-methionine</name>
        <dbReference type="ChEBI" id="CHEBI:59789"/>
    </ligand>
</feature>
<feature type="binding site" evidence="1">
    <location>
        <position position="226"/>
    </location>
    <ligand>
        <name>S-adenosyl-L-methionine</name>
        <dbReference type="ChEBI" id="CHEBI:59789"/>
    </ligand>
</feature>
<feature type="binding site" evidence="1">
    <location>
        <position position="242"/>
    </location>
    <ligand>
        <name>S-adenosyl-L-methionine</name>
        <dbReference type="ChEBI" id="CHEBI:59789"/>
    </ligand>
</feature>
<feature type="binding site" evidence="1">
    <location>
        <position position="302"/>
    </location>
    <ligand>
        <name>S-adenosyl-L-methionine</name>
        <dbReference type="ChEBI" id="CHEBI:59789"/>
    </ligand>
</feature>
<protein>
    <recommendedName>
        <fullName evidence="1">tRNA/tmRNA (uracil-C(5))-methyltransferase</fullName>
        <ecNumber evidence="1">2.1.1.-</ecNumber>
        <ecNumber evidence="1">2.1.1.35</ecNumber>
    </recommendedName>
    <alternativeName>
        <fullName evidence="1">tRNA (uracil(54)-C(5))-methyltransferase</fullName>
    </alternativeName>
    <alternativeName>
        <fullName evidence="1">tRNA(m5U54)-methyltransferase</fullName>
        <shortName evidence="1">RUMT</shortName>
    </alternativeName>
    <alternativeName>
        <fullName evidence="1">tmRNA (uracil(341)-C(5))-methyltransferase</fullName>
    </alternativeName>
</protein>
<accession>A6VLF9</accession>